<organism>
    <name type="scientific">Clostridium botulinum (strain Alaska E43 / Type E3)</name>
    <dbReference type="NCBI Taxonomy" id="508767"/>
    <lineage>
        <taxon>Bacteria</taxon>
        <taxon>Bacillati</taxon>
        <taxon>Bacillota</taxon>
        <taxon>Clostridia</taxon>
        <taxon>Eubacteriales</taxon>
        <taxon>Clostridiaceae</taxon>
        <taxon>Clostridium</taxon>
    </lineage>
</organism>
<dbReference type="EC" id="3.5.1.44" evidence="1"/>
<dbReference type="EMBL" id="CP001078">
    <property type="protein sequence ID" value="ACD51638.1"/>
    <property type="molecule type" value="Genomic_DNA"/>
</dbReference>
<dbReference type="RefSeq" id="WP_003371141.1">
    <property type="nucleotide sequence ID" value="NC_010723.1"/>
</dbReference>
<dbReference type="SMR" id="B2V1Y4"/>
<dbReference type="KEGG" id="cbt:CLH_0763"/>
<dbReference type="HOGENOM" id="CLU_087854_2_0_9"/>
<dbReference type="GO" id="GO:0050568">
    <property type="term" value="F:protein-glutamine glutaminase activity"/>
    <property type="evidence" value="ECO:0007669"/>
    <property type="project" value="UniProtKB-UniRule"/>
</dbReference>
<dbReference type="GO" id="GO:0006935">
    <property type="term" value="P:chemotaxis"/>
    <property type="evidence" value="ECO:0007669"/>
    <property type="project" value="UniProtKB-UniRule"/>
</dbReference>
<dbReference type="CDD" id="cd16352">
    <property type="entry name" value="CheD"/>
    <property type="match status" value="1"/>
</dbReference>
<dbReference type="Gene3D" id="3.30.1330.200">
    <property type="match status" value="1"/>
</dbReference>
<dbReference type="HAMAP" id="MF_01440">
    <property type="entry name" value="CheD"/>
    <property type="match status" value="1"/>
</dbReference>
<dbReference type="InterPro" id="IPR038592">
    <property type="entry name" value="CheD-like_sf"/>
</dbReference>
<dbReference type="InterPro" id="IPR005659">
    <property type="entry name" value="Chemorcpt_Glu_NH3ase_CheD"/>
</dbReference>
<dbReference type="InterPro" id="IPR011324">
    <property type="entry name" value="Cytotoxic_necrot_fac-like_cat"/>
</dbReference>
<dbReference type="NCBIfam" id="NF010015">
    <property type="entry name" value="PRK13490.1"/>
    <property type="match status" value="1"/>
</dbReference>
<dbReference type="PANTHER" id="PTHR35147">
    <property type="entry name" value="CHEMORECEPTOR GLUTAMINE DEAMIDASE CHED-RELATED"/>
    <property type="match status" value="1"/>
</dbReference>
<dbReference type="PANTHER" id="PTHR35147:SF1">
    <property type="entry name" value="CHEMORECEPTOR GLUTAMINE DEAMIDASE CHED-RELATED"/>
    <property type="match status" value="1"/>
</dbReference>
<dbReference type="Pfam" id="PF03975">
    <property type="entry name" value="CheD"/>
    <property type="match status" value="1"/>
</dbReference>
<dbReference type="SUPFAM" id="SSF64438">
    <property type="entry name" value="CNF1/YfiH-like putative cysteine hydrolases"/>
    <property type="match status" value="1"/>
</dbReference>
<comment type="function">
    <text evidence="1">Probably deamidates glutamine residues to glutamate on methyl-accepting chemotaxis receptors (MCPs), playing an important role in chemotaxis.</text>
</comment>
<comment type="catalytic activity">
    <reaction evidence="1">
        <text>L-glutaminyl-[protein] + H2O = L-glutamyl-[protein] + NH4(+)</text>
        <dbReference type="Rhea" id="RHEA:16441"/>
        <dbReference type="Rhea" id="RHEA-COMP:10207"/>
        <dbReference type="Rhea" id="RHEA-COMP:10208"/>
        <dbReference type="ChEBI" id="CHEBI:15377"/>
        <dbReference type="ChEBI" id="CHEBI:28938"/>
        <dbReference type="ChEBI" id="CHEBI:29973"/>
        <dbReference type="ChEBI" id="CHEBI:30011"/>
        <dbReference type="EC" id="3.5.1.44"/>
    </reaction>
</comment>
<comment type="similarity">
    <text evidence="1">Belongs to the CheD family.</text>
</comment>
<reference key="1">
    <citation type="submission" date="2008-05" db="EMBL/GenBank/DDBJ databases">
        <title>Complete genome sequence of Clostridium botulinum E3 str. Alaska E43.</title>
        <authorList>
            <person name="Brinkac L.M."/>
            <person name="Brown J.L."/>
            <person name="Bruce D."/>
            <person name="Detter C."/>
            <person name="Munk C."/>
            <person name="Smith L.A."/>
            <person name="Smith T.J."/>
            <person name="Sutton G."/>
            <person name="Brettin T.S."/>
        </authorList>
    </citation>
    <scope>NUCLEOTIDE SEQUENCE [LARGE SCALE GENOMIC DNA]</scope>
    <source>
        <strain>Alaska E43 / Type E3</strain>
    </source>
</reference>
<feature type="chain" id="PRO_1000145887" description="Probable chemoreceptor glutamine deamidase CheD">
    <location>
        <begin position="1"/>
        <end position="162"/>
    </location>
</feature>
<accession>B2V1Y4</accession>
<name>CHED_CLOBA</name>
<sequence length="162" mass="17330">MENTEVKVGIADLNLVSSPGKIMTIGLGSCIGIALYDRRSKLAGLSHIMLPDSTQFKNVTNPMKFADLAIPLLIKKMEAKGCLKRNLIAKIAGGASMFSFSDKSMVGDIGKRNIQAVKKSLSEERIQIIAEDVGGNKGRTMILDALDGKVTLKIVGIGIVEL</sequence>
<protein>
    <recommendedName>
        <fullName evidence="1">Probable chemoreceptor glutamine deamidase CheD</fullName>
        <ecNumber evidence="1">3.5.1.44</ecNumber>
    </recommendedName>
</protein>
<gene>
    <name evidence="1" type="primary">cheD</name>
    <name type="ordered locus">CLH_0763</name>
</gene>
<keyword id="KW-0145">Chemotaxis</keyword>
<keyword id="KW-0378">Hydrolase</keyword>
<proteinExistence type="inferred from homology"/>
<evidence type="ECO:0000255" key="1">
    <source>
        <dbReference type="HAMAP-Rule" id="MF_01440"/>
    </source>
</evidence>